<gene>
    <name evidence="1" type="primary">purA</name>
    <name type="ordered locus">Bphy_1409</name>
</gene>
<sequence>MSASAVNVNPGRNVVVVGTQWGDEGKGKIVDWLTDHAQGVVRFQGGHNAGHTLIIGGKKTILRLIPSGIMRPGVACYIGNGVVLSPEALFKEIEELESAGIDVQKRLFISEATTLILPYHVAIDQAREARSGAGKIGTTGRGIGPAYEDKVARRGLRVQDLFEPKAFAERLRANLDFHNFVLTQYLGAPAVDYQQTLDMMLSYADRLKPMVTDVSRRLYDENHVGNNLLFEGAQGTLLDIDHGTYPFVTSSNCVAGAATAGAGIGPQKLDYILGITKAYCTRVGSGPFPSELYDADNANRQEEVGLTLAKVGKEFGSVTGRPRRTGWLDAAALRRAIQINGVSGLCITKLDVLDGLDEVKLCVGYTIDGKDADILPRGAYEVSRCEPVYETFGGWKESTVGIKEWNKLPANAQAYLTRVQEVAGVPIDMVSTGPDRDETILLRHPFKV</sequence>
<keyword id="KW-0963">Cytoplasm</keyword>
<keyword id="KW-0342">GTP-binding</keyword>
<keyword id="KW-0436">Ligase</keyword>
<keyword id="KW-0460">Magnesium</keyword>
<keyword id="KW-0479">Metal-binding</keyword>
<keyword id="KW-0547">Nucleotide-binding</keyword>
<keyword id="KW-0658">Purine biosynthesis</keyword>
<keyword id="KW-1185">Reference proteome</keyword>
<feature type="chain" id="PRO_1000089274" description="Adenylosuccinate synthetase">
    <location>
        <begin position="1"/>
        <end position="448"/>
    </location>
</feature>
<feature type="active site" description="Proton acceptor" evidence="1">
    <location>
        <position position="23"/>
    </location>
</feature>
<feature type="active site" description="Proton donor" evidence="1">
    <location>
        <position position="51"/>
    </location>
</feature>
<feature type="binding site" evidence="1">
    <location>
        <begin position="22"/>
        <end position="28"/>
    </location>
    <ligand>
        <name>GTP</name>
        <dbReference type="ChEBI" id="CHEBI:37565"/>
    </ligand>
</feature>
<feature type="binding site" description="in other chain" evidence="1">
    <location>
        <begin position="23"/>
        <end position="26"/>
    </location>
    <ligand>
        <name>IMP</name>
        <dbReference type="ChEBI" id="CHEBI:58053"/>
        <note>ligand shared between dimeric partners</note>
    </ligand>
</feature>
<feature type="binding site" evidence="1">
    <location>
        <position position="23"/>
    </location>
    <ligand>
        <name>Mg(2+)</name>
        <dbReference type="ChEBI" id="CHEBI:18420"/>
    </ligand>
</feature>
<feature type="binding site" description="in other chain" evidence="1">
    <location>
        <begin position="48"/>
        <end position="51"/>
    </location>
    <ligand>
        <name>IMP</name>
        <dbReference type="ChEBI" id="CHEBI:58053"/>
        <note>ligand shared between dimeric partners</note>
    </ligand>
</feature>
<feature type="binding site" evidence="1">
    <location>
        <begin position="50"/>
        <end position="52"/>
    </location>
    <ligand>
        <name>GTP</name>
        <dbReference type="ChEBI" id="CHEBI:37565"/>
    </ligand>
</feature>
<feature type="binding site" evidence="1">
    <location>
        <position position="50"/>
    </location>
    <ligand>
        <name>Mg(2+)</name>
        <dbReference type="ChEBI" id="CHEBI:18420"/>
    </ligand>
</feature>
<feature type="binding site" description="in other chain" evidence="1">
    <location>
        <position position="139"/>
    </location>
    <ligand>
        <name>IMP</name>
        <dbReference type="ChEBI" id="CHEBI:58053"/>
        <note>ligand shared between dimeric partners</note>
    </ligand>
</feature>
<feature type="binding site" evidence="1">
    <location>
        <position position="153"/>
    </location>
    <ligand>
        <name>IMP</name>
        <dbReference type="ChEBI" id="CHEBI:58053"/>
        <note>ligand shared between dimeric partners</note>
    </ligand>
</feature>
<feature type="binding site" description="in other chain" evidence="1">
    <location>
        <position position="234"/>
    </location>
    <ligand>
        <name>IMP</name>
        <dbReference type="ChEBI" id="CHEBI:58053"/>
        <note>ligand shared between dimeric partners</note>
    </ligand>
</feature>
<feature type="binding site" description="in other chain" evidence="1">
    <location>
        <position position="249"/>
    </location>
    <ligand>
        <name>IMP</name>
        <dbReference type="ChEBI" id="CHEBI:58053"/>
        <note>ligand shared between dimeric partners</note>
    </ligand>
</feature>
<feature type="binding site" evidence="1">
    <location>
        <begin position="317"/>
        <end position="323"/>
    </location>
    <ligand>
        <name>substrate</name>
    </ligand>
</feature>
<feature type="binding site" description="in other chain" evidence="1">
    <location>
        <position position="321"/>
    </location>
    <ligand>
        <name>IMP</name>
        <dbReference type="ChEBI" id="CHEBI:58053"/>
        <note>ligand shared between dimeric partners</note>
    </ligand>
</feature>
<feature type="binding site" evidence="1">
    <location>
        <position position="323"/>
    </location>
    <ligand>
        <name>GTP</name>
        <dbReference type="ChEBI" id="CHEBI:37565"/>
    </ligand>
</feature>
<feature type="binding site" evidence="1">
    <location>
        <begin position="349"/>
        <end position="351"/>
    </location>
    <ligand>
        <name>GTP</name>
        <dbReference type="ChEBI" id="CHEBI:37565"/>
    </ligand>
</feature>
<feature type="binding site" evidence="1">
    <location>
        <begin position="431"/>
        <end position="433"/>
    </location>
    <ligand>
        <name>GTP</name>
        <dbReference type="ChEBI" id="CHEBI:37565"/>
    </ligand>
</feature>
<accession>B2JIU0</accession>
<name>PURA_PARP8</name>
<proteinExistence type="inferred from homology"/>
<protein>
    <recommendedName>
        <fullName evidence="1">Adenylosuccinate synthetase</fullName>
        <shortName evidence="1">AMPSase</shortName>
        <shortName evidence="1">AdSS</shortName>
        <ecNumber evidence="1">6.3.4.4</ecNumber>
    </recommendedName>
    <alternativeName>
        <fullName evidence="1">IMP--aspartate ligase</fullName>
    </alternativeName>
</protein>
<reference key="1">
    <citation type="journal article" date="2014" name="Stand. Genomic Sci.">
        <title>Complete genome sequence of Burkholderia phymatum STM815(T), a broad host range and efficient nitrogen-fixing symbiont of Mimosa species.</title>
        <authorList>
            <person name="Moulin L."/>
            <person name="Klonowska A."/>
            <person name="Caroline B."/>
            <person name="Booth K."/>
            <person name="Vriezen J.A."/>
            <person name="Melkonian R."/>
            <person name="James E.K."/>
            <person name="Young J.P."/>
            <person name="Bena G."/>
            <person name="Hauser L."/>
            <person name="Land M."/>
            <person name="Kyrpides N."/>
            <person name="Bruce D."/>
            <person name="Chain P."/>
            <person name="Copeland A."/>
            <person name="Pitluck S."/>
            <person name="Woyke T."/>
            <person name="Lizotte-Waniewski M."/>
            <person name="Bristow J."/>
            <person name="Riley M."/>
        </authorList>
    </citation>
    <scope>NUCLEOTIDE SEQUENCE [LARGE SCALE GENOMIC DNA]</scope>
    <source>
        <strain>DSM 17167 / CIP 108236 / LMG 21445 / STM815</strain>
    </source>
</reference>
<dbReference type="EC" id="6.3.4.4" evidence="1"/>
<dbReference type="EMBL" id="CP001043">
    <property type="protein sequence ID" value="ACC70591.1"/>
    <property type="molecule type" value="Genomic_DNA"/>
</dbReference>
<dbReference type="RefSeq" id="WP_012400805.1">
    <property type="nucleotide sequence ID" value="NC_010622.1"/>
</dbReference>
<dbReference type="SMR" id="B2JIU0"/>
<dbReference type="STRING" id="391038.Bphy_1409"/>
<dbReference type="KEGG" id="bph:Bphy_1409"/>
<dbReference type="eggNOG" id="COG0104">
    <property type="taxonomic scope" value="Bacteria"/>
</dbReference>
<dbReference type="HOGENOM" id="CLU_029848_0_0_4"/>
<dbReference type="OrthoDB" id="9807553at2"/>
<dbReference type="UniPathway" id="UPA00075">
    <property type="reaction ID" value="UER00335"/>
</dbReference>
<dbReference type="Proteomes" id="UP000001192">
    <property type="component" value="Chromosome 1"/>
</dbReference>
<dbReference type="GO" id="GO:0005737">
    <property type="term" value="C:cytoplasm"/>
    <property type="evidence" value="ECO:0007669"/>
    <property type="project" value="UniProtKB-SubCell"/>
</dbReference>
<dbReference type="GO" id="GO:0004019">
    <property type="term" value="F:adenylosuccinate synthase activity"/>
    <property type="evidence" value="ECO:0007669"/>
    <property type="project" value="UniProtKB-UniRule"/>
</dbReference>
<dbReference type="GO" id="GO:0005525">
    <property type="term" value="F:GTP binding"/>
    <property type="evidence" value="ECO:0007669"/>
    <property type="project" value="UniProtKB-UniRule"/>
</dbReference>
<dbReference type="GO" id="GO:0000287">
    <property type="term" value="F:magnesium ion binding"/>
    <property type="evidence" value="ECO:0007669"/>
    <property type="project" value="UniProtKB-UniRule"/>
</dbReference>
<dbReference type="GO" id="GO:0044208">
    <property type="term" value="P:'de novo' AMP biosynthetic process"/>
    <property type="evidence" value="ECO:0007669"/>
    <property type="project" value="UniProtKB-UniRule"/>
</dbReference>
<dbReference type="GO" id="GO:0046040">
    <property type="term" value="P:IMP metabolic process"/>
    <property type="evidence" value="ECO:0007669"/>
    <property type="project" value="TreeGrafter"/>
</dbReference>
<dbReference type="CDD" id="cd03108">
    <property type="entry name" value="AdSS"/>
    <property type="match status" value="1"/>
</dbReference>
<dbReference type="FunFam" id="1.10.300.10:FF:000001">
    <property type="entry name" value="Adenylosuccinate synthetase"/>
    <property type="match status" value="1"/>
</dbReference>
<dbReference type="FunFam" id="3.90.170.10:FF:000001">
    <property type="entry name" value="Adenylosuccinate synthetase"/>
    <property type="match status" value="1"/>
</dbReference>
<dbReference type="Gene3D" id="3.40.440.10">
    <property type="entry name" value="Adenylosuccinate Synthetase, subunit A, domain 1"/>
    <property type="match status" value="1"/>
</dbReference>
<dbReference type="Gene3D" id="1.10.300.10">
    <property type="entry name" value="Adenylosuccinate Synthetase, subunit A, domain 2"/>
    <property type="match status" value="1"/>
</dbReference>
<dbReference type="Gene3D" id="3.90.170.10">
    <property type="entry name" value="Adenylosuccinate Synthetase, subunit A, domain 3"/>
    <property type="match status" value="1"/>
</dbReference>
<dbReference type="HAMAP" id="MF_00011">
    <property type="entry name" value="Adenylosucc_synth"/>
    <property type="match status" value="1"/>
</dbReference>
<dbReference type="InterPro" id="IPR018220">
    <property type="entry name" value="Adenylosuccin_syn_GTP-bd"/>
</dbReference>
<dbReference type="InterPro" id="IPR033128">
    <property type="entry name" value="Adenylosuccin_syn_Lys_AS"/>
</dbReference>
<dbReference type="InterPro" id="IPR042109">
    <property type="entry name" value="Adenylosuccinate_synth_dom1"/>
</dbReference>
<dbReference type="InterPro" id="IPR042110">
    <property type="entry name" value="Adenylosuccinate_synth_dom2"/>
</dbReference>
<dbReference type="InterPro" id="IPR042111">
    <property type="entry name" value="Adenylosuccinate_synth_dom3"/>
</dbReference>
<dbReference type="InterPro" id="IPR001114">
    <property type="entry name" value="Adenylosuccinate_synthetase"/>
</dbReference>
<dbReference type="InterPro" id="IPR027417">
    <property type="entry name" value="P-loop_NTPase"/>
</dbReference>
<dbReference type="NCBIfam" id="NF002223">
    <property type="entry name" value="PRK01117.1"/>
    <property type="match status" value="1"/>
</dbReference>
<dbReference type="NCBIfam" id="TIGR00184">
    <property type="entry name" value="purA"/>
    <property type="match status" value="1"/>
</dbReference>
<dbReference type="PANTHER" id="PTHR11846">
    <property type="entry name" value="ADENYLOSUCCINATE SYNTHETASE"/>
    <property type="match status" value="1"/>
</dbReference>
<dbReference type="PANTHER" id="PTHR11846:SF0">
    <property type="entry name" value="ADENYLOSUCCINATE SYNTHETASE"/>
    <property type="match status" value="1"/>
</dbReference>
<dbReference type="Pfam" id="PF00709">
    <property type="entry name" value="Adenylsucc_synt"/>
    <property type="match status" value="1"/>
</dbReference>
<dbReference type="SMART" id="SM00788">
    <property type="entry name" value="Adenylsucc_synt"/>
    <property type="match status" value="1"/>
</dbReference>
<dbReference type="SUPFAM" id="SSF52540">
    <property type="entry name" value="P-loop containing nucleoside triphosphate hydrolases"/>
    <property type="match status" value="1"/>
</dbReference>
<dbReference type="PROSITE" id="PS01266">
    <property type="entry name" value="ADENYLOSUCCIN_SYN_1"/>
    <property type="match status" value="1"/>
</dbReference>
<dbReference type="PROSITE" id="PS00513">
    <property type="entry name" value="ADENYLOSUCCIN_SYN_2"/>
    <property type="match status" value="1"/>
</dbReference>
<evidence type="ECO:0000255" key="1">
    <source>
        <dbReference type="HAMAP-Rule" id="MF_00011"/>
    </source>
</evidence>
<comment type="function">
    <text evidence="1">Plays an important role in the de novo pathway of purine nucleotide biosynthesis. Catalyzes the first committed step in the biosynthesis of AMP from IMP.</text>
</comment>
<comment type="catalytic activity">
    <reaction evidence="1">
        <text>IMP + L-aspartate + GTP = N(6)-(1,2-dicarboxyethyl)-AMP + GDP + phosphate + 2 H(+)</text>
        <dbReference type="Rhea" id="RHEA:15753"/>
        <dbReference type="ChEBI" id="CHEBI:15378"/>
        <dbReference type="ChEBI" id="CHEBI:29991"/>
        <dbReference type="ChEBI" id="CHEBI:37565"/>
        <dbReference type="ChEBI" id="CHEBI:43474"/>
        <dbReference type="ChEBI" id="CHEBI:57567"/>
        <dbReference type="ChEBI" id="CHEBI:58053"/>
        <dbReference type="ChEBI" id="CHEBI:58189"/>
        <dbReference type="EC" id="6.3.4.4"/>
    </reaction>
</comment>
<comment type="cofactor">
    <cofactor evidence="1">
        <name>Mg(2+)</name>
        <dbReference type="ChEBI" id="CHEBI:18420"/>
    </cofactor>
    <text evidence="1">Binds 1 Mg(2+) ion per subunit.</text>
</comment>
<comment type="pathway">
    <text evidence="1">Purine metabolism; AMP biosynthesis via de novo pathway; AMP from IMP: step 1/2.</text>
</comment>
<comment type="subunit">
    <text evidence="1">Homodimer.</text>
</comment>
<comment type="subcellular location">
    <subcellularLocation>
        <location evidence="1">Cytoplasm</location>
    </subcellularLocation>
</comment>
<comment type="similarity">
    <text evidence="1">Belongs to the adenylosuccinate synthetase family.</text>
</comment>
<organism>
    <name type="scientific">Paraburkholderia phymatum (strain DSM 17167 / CIP 108236 / LMG 21445 / STM815)</name>
    <name type="common">Burkholderia phymatum</name>
    <dbReference type="NCBI Taxonomy" id="391038"/>
    <lineage>
        <taxon>Bacteria</taxon>
        <taxon>Pseudomonadati</taxon>
        <taxon>Pseudomonadota</taxon>
        <taxon>Betaproteobacteria</taxon>
        <taxon>Burkholderiales</taxon>
        <taxon>Burkholderiaceae</taxon>
        <taxon>Paraburkholderia</taxon>
    </lineage>
</organism>